<proteinExistence type="inferred from homology"/>
<protein>
    <recommendedName>
        <fullName evidence="1">ATP synthase subunit delta</fullName>
    </recommendedName>
    <alternativeName>
        <fullName evidence="1">ATP synthase F(1) sector subunit delta</fullName>
    </alternativeName>
    <alternativeName>
        <fullName evidence="1">F-type ATPase subunit delta</fullName>
        <shortName evidence="1">F-ATPase subunit delta</shortName>
    </alternativeName>
</protein>
<gene>
    <name evidence="1" type="primary">atpH</name>
    <name type="ordered locus">Tpet_1178</name>
</gene>
<accession>A5ILW9</accession>
<dbReference type="EMBL" id="CP000702">
    <property type="protein sequence ID" value="ABQ47192.1"/>
    <property type="molecule type" value="Genomic_DNA"/>
</dbReference>
<dbReference type="RefSeq" id="WP_004082066.1">
    <property type="nucleotide sequence ID" value="NC_009486.1"/>
</dbReference>
<dbReference type="SMR" id="A5ILW9"/>
<dbReference type="STRING" id="390874.Tpet_1178"/>
<dbReference type="KEGG" id="tpt:Tpet_1178"/>
<dbReference type="eggNOG" id="COG0712">
    <property type="taxonomic scope" value="Bacteria"/>
</dbReference>
<dbReference type="HOGENOM" id="CLU_085114_4_0_0"/>
<dbReference type="Proteomes" id="UP000006558">
    <property type="component" value="Chromosome"/>
</dbReference>
<dbReference type="GO" id="GO:0005886">
    <property type="term" value="C:plasma membrane"/>
    <property type="evidence" value="ECO:0007669"/>
    <property type="project" value="UniProtKB-SubCell"/>
</dbReference>
<dbReference type="GO" id="GO:0045259">
    <property type="term" value="C:proton-transporting ATP synthase complex"/>
    <property type="evidence" value="ECO:0007669"/>
    <property type="project" value="UniProtKB-KW"/>
</dbReference>
<dbReference type="GO" id="GO:0046933">
    <property type="term" value="F:proton-transporting ATP synthase activity, rotational mechanism"/>
    <property type="evidence" value="ECO:0007669"/>
    <property type="project" value="UniProtKB-UniRule"/>
</dbReference>
<dbReference type="Gene3D" id="1.10.520.20">
    <property type="entry name" value="N-terminal domain of the delta subunit of the F1F0-ATP synthase"/>
    <property type="match status" value="1"/>
</dbReference>
<dbReference type="HAMAP" id="MF_01416">
    <property type="entry name" value="ATP_synth_delta_bact"/>
    <property type="match status" value="1"/>
</dbReference>
<dbReference type="InterPro" id="IPR026015">
    <property type="entry name" value="ATP_synth_OSCP/delta_N_sf"/>
</dbReference>
<dbReference type="InterPro" id="IPR000711">
    <property type="entry name" value="ATPase_OSCP/dsu"/>
</dbReference>
<dbReference type="NCBIfam" id="TIGR01145">
    <property type="entry name" value="ATP_synt_delta"/>
    <property type="match status" value="1"/>
</dbReference>
<dbReference type="NCBIfam" id="NF009976">
    <property type="entry name" value="PRK13441.1"/>
    <property type="match status" value="1"/>
</dbReference>
<dbReference type="PANTHER" id="PTHR11910">
    <property type="entry name" value="ATP SYNTHASE DELTA CHAIN"/>
    <property type="match status" value="1"/>
</dbReference>
<dbReference type="Pfam" id="PF00213">
    <property type="entry name" value="OSCP"/>
    <property type="match status" value="1"/>
</dbReference>
<dbReference type="PRINTS" id="PR00125">
    <property type="entry name" value="ATPASEDELTA"/>
</dbReference>
<dbReference type="SUPFAM" id="SSF47928">
    <property type="entry name" value="N-terminal domain of the delta subunit of the F1F0-ATP synthase"/>
    <property type="match status" value="1"/>
</dbReference>
<keyword id="KW-0066">ATP synthesis</keyword>
<keyword id="KW-0997">Cell inner membrane</keyword>
<keyword id="KW-1003">Cell membrane</keyword>
<keyword id="KW-0139">CF(1)</keyword>
<keyword id="KW-0375">Hydrogen ion transport</keyword>
<keyword id="KW-0406">Ion transport</keyword>
<keyword id="KW-0472">Membrane</keyword>
<keyword id="KW-0813">Transport</keyword>
<name>ATPD_THEP1</name>
<feature type="chain" id="PRO_0000382163" description="ATP synthase subunit delta">
    <location>
        <begin position="1"/>
        <end position="183"/>
    </location>
</feature>
<sequence>MRFSAVAGRYARALLNVAIEKEKEEEYLRFLDLVCQIYESSRELFDNPILKPEKKISLIKEIMKSFGQEMDEFQERFLTLVFERKRQKLLRNIRDLFEYEKILSEQKVPANLSIAHSPEDEELSLLRKFVRKYALKDPVFDISIDESLIAGALVEFEGFRLDTTVQGRLKRIAREALKRGEMS</sequence>
<reference key="1">
    <citation type="submission" date="2007-05" db="EMBL/GenBank/DDBJ databases">
        <title>Complete sequence of Thermotoga petrophila RKU-1.</title>
        <authorList>
            <consortium name="US DOE Joint Genome Institute"/>
            <person name="Copeland A."/>
            <person name="Lucas S."/>
            <person name="Lapidus A."/>
            <person name="Barry K."/>
            <person name="Glavina del Rio T."/>
            <person name="Dalin E."/>
            <person name="Tice H."/>
            <person name="Pitluck S."/>
            <person name="Sims D."/>
            <person name="Brettin T."/>
            <person name="Bruce D."/>
            <person name="Detter J.C."/>
            <person name="Han C."/>
            <person name="Tapia R."/>
            <person name="Schmutz J."/>
            <person name="Larimer F."/>
            <person name="Land M."/>
            <person name="Hauser L."/>
            <person name="Kyrpides N."/>
            <person name="Mikhailova N."/>
            <person name="Nelson K."/>
            <person name="Gogarten J.P."/>
            <person name="Noll K."/>
            <person name="Richardson P."/>
        </authorList>
    </citation>
    <scope>NUCLEOTIDE SEQUENCE [LARGE SCALE GENOMIC DNA]</scope>
    <source>
        <strain>ATCC BAA-488 / DSM 13995 / JCM 10881 / RKU-1</strain>
    </source>
</reference>
<evidence type="ECO:0000255" key="1">
    <source>
        <dbReference type="HAMAP-Rule" id="MF_01416"/>
    </source>
</evidence>
<organism>
    <name type="scientific">Thermotoga petrophila (strain ATCC BAA-488 / DSM 13995 / JCM 10881 / RKU-1)</name>
    <dbReference type="NCBI Taxonomy" id="390874"/>
    <lineage>
        <taxon>Bacteria</taxon>
        <taxon>Thermotogati</taxon>
        <taxon>Thermotogota</taxon>
        <taxon>Thermotogae</taxon>
        <taxon>Thermotogales</taxon>
        <taxon>Thermotogaceae</taxon>
        <taxon>Thermotoga</taxon>
    </lineage>
</organism>
<comment type="function">
    <text evidence="1">F(1)F(0) ATP synthase produces ATP from ADP in the presence of a proton or sodium gradient. F-type ATPases consist of two structural domains, F(1) containing the extramembraneous catalytic core and F(0) containing the membrane proton channel, linked together by a central stalk and a peripheral stalk. During catalysis, ATP synthesis in the catalytic domain of F(1) is coupled via a rotary mechanism of the central stalk subunits to proton translocation.</text>
</comment>
<comment type="function">
    <text evidence="1">This protein is part of the stalk that links CF(0) to CF(1). It either transmits conformational changes from CF(0) to CF(1) or is implicated in proton conduction.</text>
</comment>
<comment type="subunit">
    <text evidence="1">F-type ATPases have 2 components, F(1) - the catalytic core - and F(0) - the membrane proton channel. F(1) has five subunits: alpha(3), beta(3), gamma(1), delta(1), epsilon(1). F(0) has three main subunits: a(1), b(2) and c(10-14). The alpha and beta chains form an alternating ring which encloses part of the gamma chain. F(1) is attached to F(0) by a central stalk formed by the gamma and epsilon chains, while a peripheral stalk is formed by the delta and b chains.</text>
</comment>
<comment type="subcellular location">
    <subcellularLocation>
        <location evidence="1">Cell inner membrane</location>
        <topology evidence="1">Peripheral membrane protein</topology>
    </subcellularLocation>
</comment>
<comment type="similarity">
    <text evidence="1">Belongs to the ATPase delta chain family.</text>
</comment>